<organism>
    <name type="scientific">Clostridium beijerinckii (strain ATCC 51743 / NCIMB 8052)</name>
    <name type="common">Clostridium acetobutylicum</name>
    <dbReference type="NCBI Taxonomy" id="290402"/>
    <lineage>
        <taxon>Bacteria</taxon>
        <taxon>Bacillati</taxon>
        <taxon>Bacillota</taxon>
        <taxon>Clostridia</taxon>
        <taxon>Eubacteriales</taxon>
        <taxon>Clostridiaceae</taxon>
        <taxon>Clostridium</taxon>
    </lineage>
</organism>
<protein>
    <recommendedName>
        <fullName>Uncharacterized protein Cbei_0205</fullName>
    </recommendedName>
    <alternativeName>
        <fullName>ORF4</fullName>
    </alternativeName>
</protein>
<dbReference type="EMBL" id="L04468">
    <property type="protein sequence ID" value="AAA52082.1"/>
    <property type="molecule type" value="Genomic_DNA"/>
</dbReference>
<dbReference type="EMBL" id="CP000721">
    <property type="protein sequence ID" value="ABR32395.1"/>
    <property type="molecule type" value="Genomic_DNA"/>
</dbReference>
<dbReference type="RefSeq" id="WP_011967557.1">
    <property type="nucleotide sequence ID" value="NC_009617.1"/>
</dbReference>
<dbReference type="SMR" id="Q05626"/>
<dbReference type="KEGG" id="cbe:Cbei_0205"/>
<dbReference type="eggNOG" id="COG1418">
    <property type="taxonomic scope" value="Bacteria"/>
</dbReference>
<dbReference type="HOGENOM" id="CLU_106618_0_0_9"/>
<dbReference type="Proteomes" id="UP000000565">
    <property type="component" value="Chromosome"/>
</dbReference>
<dbReference type="CDD" id="cd00077">
    <property type="entry name" value="HDc"/>
    <property type="match status" value="1"/>
</dbReference>
<dbReference type="Gene3D" id="1.10.3210.10">
    <property type="entry name" value="Hypothetical protein af1432"/>
    <property type="match status" value="1"/>
</dbReference>
<dbReference type="InterPro" id="IPR003607">
    <property type="entry name" value="HD/PDEase_dom"/>
</dbReference>
<dbReference type="InterPro" id="IPR006674">
    <property type="entry name" value="HD_domain"/>
</dbReference>
<dbReference type="InterPro" id="IPR006675">
    <property type="entry name" value="HDIG_dom"/>
</dbReference>
<dbReference type="NCBIfam" id="TIGR00277">
    <property type="entry name" value="HDIG"/>
    <property type="match status" value="1"/>
</dbReference>
<dbReference type="Pfam" id="PF01966">
    <property type="entry name" value="HD"/>
    <property type="match status" value="1"/>
</dbReference>
<dbReference type="SMART" id="SM00471">
    <property type="entry name" value="HDc"/>
    <property type="match status" value="1"/>
</dbReference>
<dbReference type="SUPFAM" id="SSF109604">
    <property type="entry name" value="HD-domain/PDEase-like"/>
    <property type="match status" value="1"/>
</dbReference>
<dbReference type="PROSITE" id="PS51831">
    <property type="entry name" value="HD"/>
    <property type="match status" value="1"/>
</dbReference>
<feature type="chain" id="PRO_0000066155" description="Uncharacterized protein Cbei_0205">
    <location>
        <begin position="1"/>
        <end position="157"/>
    </location>
</feature>
<feature type="domain" description="HD" evidence="1">
    <location>
        <begin position="33"/>
        <end position="134"/>
    </location>
</feature>
<sequence length="157" mass="18897">MDRFNCILNDTEYIYYLKRNKKFEKDRKFCKHNLKHFLDVARIAQLINLEESLGFNKEIIYTTAILHDIGKSLQYENGTPHEISSWEISKEILHNYRYNEEEIEIIKQGILGHRDKKSENFAQLMYRADKLSRLCISCKSIDECNWGDEKKNFKIYY</sequence>
<evidence type="ECO:0000255" key="1">
    <source>
        <dbReference type="PROSITE-ProRule" id="PRU01175"/>
    </source>
</evidence>
<accession>Q05626</accession>
<accession>A6LPW5</accession>
<gene>
    <name type="ordered locus">Cbei_0205</name>
</gene>
<reference key="1">
    <citation type="journal article" date="1993" name="Gene">
        <title>Cloning and sequence analysis of the genes encoding phosphotransbutyrylase and butyrate kinase from Clostridium acetobutylicum NCIMB 8052.</title>
        <authorList>
            <person name="Oultram J.D."/>
            <person name="Burr I.D."/>
            <person name="Elmore M.J."/>
            <person name="Minton N.P."/>
        </authorList>
    </citation>
    <scope>NUCLEOTIDE SEQUENCE [GENOMIC DNA]</scope>
</reference>
<reference key="2">
    <citation type="submission" date="2007-06" db="EMBL/GenBank/DDBJ databases">
        <title>Complete sequence of Clostridium beijerinckii NCIMB 8052.</title>
        <authorList>
            <consortium name="US DOE Joint Genome Institute"/>
            <person name="Copeland A."/>
            <person name="Lucas S."/>
            <person name="Lapidus A."/>
            <person name="Barry K."/>
            <person name="Detter J.C."/>
            <person name="Glavina del Rio T."/>
            <person name="Hammon N."/>
            <person name="Israni S."/>
            <person name="Dalin E."/>
            <person name="Tice H."/>
            <person name="Pitluck S."/>
            <person name="Sims D."/>
            <person name="Brettin T."/>
            <person name="Bruce D."/>
            <person name="Tapia R."/>
            <person name="Brainard J."/>
            <person name="Schmutz J."/>
            <person name="Larimer F."/>
            <person name="Land M."/>
            <person name="Hauser L."/>
            <person name="Kyrpides N."/>
            <person name="Mikhailova N."/>
            <person name="Bennet G."/>
            <person name="Cann I."/>
            <person name="Chen J.-S."/>
            <person name="Contreras A.L."/>
            <person name="Jones D."/>
            <person name="Kashket E."/>
            <person name="Mitchell W."/>
            <person name="Stoddard S."/>
            <person name="Schwarz W."/>
            <person name="Qureshi N."/>
            <person name="Young M."/>
            <person name="Shi Z."/>
            <person name="Ezeji T."/>
            <person name="White B."/>
            <person name="Blaschek H."/>
            <person name="Richardson P."/>
        </authorList>
    </citation>
    <scope>NUCLEOTIDE SEQUENCE [LARGE SCALE GENOMIC DNA]</scope>
    <source>
        <strain>ATCC 51743 / NCIMB 8052</strain>
    </source>
</reference>
<proteinExistence type="predicted"/>
<name>Y205_CLOB8</name>